<organism>
    <name type="scientific">Oryza sativa subsp. japonica</name>
    <name type="common">Rice</name>
    <dbReference type="NCBI Taxonomy" id="39947"/>
    <lineage>
        <taxon>Eukaryota</taxon>
        <taxon>Viridiplantae</taxon>
        <taxon>Streptophyta</taxon>
        <taxon>Embryophyta</taxon>
        <taxon>Tracheophyta</taxon>
        <taxon>Spermatophyta</taxon>
        <taxon>Magnoliopsida</taxon>
        <taxon>Liliopsida</taxon>
        <taxon>Poales</taxon>
        <taxon>Poaceae</taxon>
        <taxon>BOP clade</taxon>
        <taxon>Oryzoideae</taxon>
        <taxon>Oryzeae</taxon>
        <taxon>Oryzinae</taxon>
        <taxon>Oryza</taxon>
        <taxon>Oryza sativa</taxon>
    </lineage>
</organism>
<evidence type="ECO:0000250" key="1">
    <source>
        <dbReference type="UniProtKB" id="Q9H7Z6"/>
    </source>
</evidence>
<evidence type="ECO:0000250" key="2">
    <source>
        <dbReference type="UniProtKB" id="Q9LXD7"/>
    </source>
</evidence>
<evidence type="ECO:0000255" key="3"/>
<evidence type="ECO:0000255" key="4">
    <source>
        <dbReference type="PROSITE-ProRule" id="PRU01063"/>
    </source>
</evidence>
<evidence type="ECO:0000305" key="5"/>
<dbReference type="EC" id="2.3.1.48" evidence="2"/>
<dbReference type="EMBL" id="AP004009">
    <property type="protein sequence ID" value="BAC07072.1"/>
    <property type="molecule type" value="Genomic_DNA"/>
</dbReference>
<dbReference type="EMBL" id="AP008213">
    <property type="protein sequence ID" value="BAF22252.1"/>
    <property type="molecule type" value="Genomic_DNA"/>
</dbReference>
<dbReference type="EMBL" id="AP014963">
    <property type="protein sequence ID" value="BAT02740.1"/>
    <property type="molecule type" value="Genomic_DNA"/>
</dbReference>
<dbReference type="RefSeq" id="XP_015644713.1">
    <property type="nucleotide sequence ID" value="XM_015789227.1"/>
</dbReference>
<dbReference type="SMR" id="Q8LI34"/>
<dbReference type="FunCoup" id="Q8LI34">
    <property type="interactions" value="2670"/>
</dbReference>
<dbReference type="STRING" id="39947.Q8LI34"/>
<dbReference type="PaxDb" id="39947-Q8LI34"/>
<dbReference type="EnsemblPlants" id="Os07t0626600-01">
    <property type="protein sequence ID" value="Os07t0626600-01"/>
    <property type="gene ID" value="Os07g0626600"/>
</dbReference>
<dbReference type="Gramene" id="Os07t0626600-01">
    <property type="protein sequence ID" value="Os07t0626600-01"/>
    <property type="gene ID" value="Os07g0626600"/>
</dbReference>
<dbReference type="KEGG" id="dosa:Os07g0626600"/>
<dbReference type="eggNOG" id="KOG2747">
    <property type="taxonomic scope" value="Eukaryota"/>
</dbReference>
<dbReference type="HOGENOM" id="CLU_011815_2_1_1"/>
<dbReference type="InParanoid" id="Q8LI34"/>
<dbReference type="OMA" id="DSPEGNN"/>
<dbReference type="OrthoDB" id="787137at2759"/>
<dbReference type="Proteomes" id="UP000000763">
    <property type="component" value="Chromosome 7"/>
</dbReference>
<dbReference type="Proteomes" id="UP000059680">
    <property type="component" value="Chromosome 7"/>
</dbReference>
<dbReference type="GO" id="GO:0000785">
    <property type="term" value="C:chromatin"/>
    <property type="evidence" value="ECO:0000318"/>
    <property type="project" value="GO_Central"/>
</dbReference>
<dbReference type="GO" id="GO:0035267">
    <property type="term" value="C:NuA4 histone acetyltransferase complex"/>
    <property type="evidence" value="ECO:0000318"/>
    <property type="project" value="GO_Central"/>
</dbReference>
<dbReference type="GO" id="GO:0005634">
    <property type="term" value="C:nucleus"/>
    <property type="evidence" value="ECO:0000318"/>
    <property type="project" value="GO_Central"/>
</dbReference>
<dbReference type="GO" id="GO:0003682">
    <property type="term" value="F:chromatin binding"/>
    <property type="evidence" value="ECO:0000318"/>
    <property type="project" value="GO_Central"/>
</dbReference>
<dbReference type="GO" id="GO:0004402">
    <property type="term" value="F:histone acetyltransferase activity"/>
    <property type="evidence" value="ECO:0000318"/>
    <property type="project" value="GO_Central"/>
</dbReference>
<dbReference type="GO" id="GO:0003712">
    <property type="term" value="F:transcription coregulator activity"/>
    <property type="evidence" value="ECO:0000318"/>
    <property type="project" value="GO_Central"/>
</dbReference>
<dbReference type="GO" id="GO:0008270">
    <property type="term" value="F:zinc ion binding"/>
    <property type="evidence" value="ECO:0007669"/>
    <property type="project" value="UniProtKB-KW"/>
</dbReference>
<dbReference type="GO" id="GO:0006357">
    <property type="term" value="P:regulation of transcription by RNA polymerase II"/>
    <property type="evidence" value="ECO:0000318"/>
    <property type="project" value="GO_Central"/>
</dbReference>
<dbReference type="CDD" id="cd18642">
    <property type="entry name" value="CBD_MOF_like"/>
    <property type="match status" value="1"/>
</dbReference>
<dbReference type="CDD" id="cd04301">
    <property type="entry name" value="NAT_SF"/>
    <property type="match status" value="1"/>
</dbReference>
<dbReference type="FunFam" id="1.10.10.10:FF:000022">
    <property type="entry name" value="Histone acetyltransferase"/>
    <property type="match status" value="1"/>
</dbReference>
<dbReference type="FunFam" id="2.30.30.140:FF:000067">
    <property type="entry name" value="Histone acetyltransferase"/>
    <property type="match status" value="1"/>
</dbReference>
<dbReference type="FunFam" id="3.30.60.60:FF:000001">
    <property type="entry name" value="Histone acetyltransferase"/>
    <property type="match status" value="1"/>
</dbReference>
<dbReference type="FunFam" id="3.40.630.30:FF:000002">
    <property type="entry name" value="Histone acetyltransferase"/>
    <property type="match status" value="1"/>
</dbReference>
<dbReference type="Gene3D" id="2.30.30.140">
    <property type="match status" value="1"/>
</dbReference>
<dbReference type="Gene3D" id="3.40.630.30">
    <property type="match status" value="1"/>
</dbReference>
<dbReference type="Gene3D" id="3.30.60.60">
    <property type="entry name" value="N-acetyl transferase-like"/>
    <property type="match status" value="1"/>
</dbReference>
<dbReference type="Gene3D" id="1.10.10.10">
    <property type="entry name" value="Winged helix-like DNA-binding domain superfamily/Winged helix DNA-binding domain"/>
    <property type="match status" value="1"/>
</dbReference>
<dbReference type="InterPro" id="IPR016181">
    <property type="entry name" value="Acyl_CoA_acyltransferase"/>
</dbReference>
<dbReference type="InterPro" id="IPR016197">
    <property type="entry name" value="Chromo-like_dom_sf"/>
</dbReference>
<dbReference type="InterPro" id="IPR000953">
    <property type="entry name" value="Chromo/chromo_shadow_dom"/>
</dbReference>
<dbReference type="InterPro" id="IPR002717">
    <property type="entry name" value="HAT_MYST-type"/>
</dbReference>
<dbReference type="InterPro" id="IPR050603">
    <property type="entry name" value="MYST_HAT"/>
</dbReference>
<dbReference type="InterPro" id="IPR025995">
    <property type="entry name" value="Tudor-knot"/>
</dbReference>
<dbReference type="InterPro" id="IPR036388">
    <property type="entry name" value="WH-like_DNA-bd_sf"/>
</dbReference>
<dbReference type="InterPro" id="IPR040706">
    <property type="entry name" value="Zf-MYST"/>
</dbReference>
<dbReference type="PANTHER" id="PTHR10615">
    <property type="entry name" value="HISTONE ACETYLTRANSFERASE"/>
    <property type="match status" value="1"/>
</dbReference>
<dbReference type="PANTHER" id="PTHR10615:SF161">
    <property type="entry name" value="HISTONE ACETYLTRANSFERASE KAT7"/>
    <property type="match status" value="1"/>
</dbReference>
<dbReference type="Pfam" id="PF01853">
    <property type="entry name" value="MOZ_SAS"/>
    <property type="match status" value="1"/>
</dbReference>
<dbReference type="Pfam" id="PF11717">
    <property type="entry name" value="Tudor-knot"/>
    <property type="match status" value="1"/>
</dbReference>
<dbReference type="Pfam" id="PF17772">
    <property type="entry name" value="zf-MYST"/>
    <property type="match status" value="1"/>
</dbReference>
<dbReference type="SMART" id="SM00298">
    <property type="entry name" value="CHROMO"/>
    <property type="match status" value="1"/>
</dbReference>
<dbReference type="SUPFAM" id="SSF55729">
    <property type="entry name" value="Acyl-CoA N-acyltransferases (Nat)"/>
    <property type="match status" value="1"/>
</dbReference>
<dbReference type="SUPFAM" id="SSF54160">
    <property type="entry name" value="Chromo domain-like"/>
    <property type="match status" value="1"/>
</dbReference>
<dbReference type="PROSITE" id="PS51726">
    <property type="entry name" value="MYST_HAT"/>
    <property type="match status" value="1"/>
</dbReference>
<protein>
    <recommendedName>
        <fullName>Putative MYST-like histone acetyltransferase 1</fullName>
        <ecNumber evidence="2">2.3.1.48</ecNumber>
    </recommendedName>
</protein>
<proteinExistence type="inferred from homology"/>
<reference key="1">
    <citation type="journal article" date="2005" name="Nature">
        <title>The map-based sequence of the rice genome.</title>
        <authorList>
            <consortium name="International rice genome sequencing project (IRGSP)"/>
        </authorList>
    </citation>
    <scope>NUCLEOTIDE SEQUENCE [LARGE SCALE GENOMIC DNA]</scope>
    <source>
        <strain>cv. Nipponbare</strain>
    </source>
</reference>
<reference key="2">
    <citation type="journal article" date="2008" name="Nucleic Acids Res.">
        <title>The rice annotation project database (RAP-DB): 2008 update.</title>
        <authorList>
            <consortium name="The rice annotation project (RAP)"/>
        </authorList>
    </citation>
    <scope>GENOME REANNOTATION</scope>
    <source>
        <strain>cv. Nipponbare</strain>
    </source>
</reference>
<reference key="3">
    <citation type="journal article" date="2013" name="Rice">
        <title>Improvement of the Oryza sativa Nipponbare reference genome using next generation sequence and optical map data.</title>
        <authorList>
            <person name="Kawahara Y."/>
            <person name="de la Bastide M."/>
            <person name="Hamilton J.P."/>
            <person name="Kanamori H."/>
            <person name="McCombie W.R."/>
            <person name="Ouyang S."/>
            <person name="Schwartz D.C."/>
            <person name="Tanaka T."/>
            <person name="Wu J."/>
            <person name="Zhou S."/>
            <person name="Childs K.L."/>
            <person name="Davidson R.M."/>
            <person name="Lin H."/>
            <person name="Quesada-Ocampo L."/>
            <person name="Vaillancourt B."/>
            <person name="Sakai H."/>
            <person name="Lee S.S."/>
            <person name="Kim J."/>
            <person name="Numa H."/>
            <person name="Itoh T."/>
            <person name="Buell C.R."/>
            <person name="Matsumoto T."/>
        </authorList>
    </citation>
    <scope>GENOME REANNOTATION</scope>
    <source>
        <strain>cv. Nipponbare</strain>
    </source>
</reference>
<comment type="function">
    <text evidence="2">Histone acetyltransferase which may be involved in transcriptional activation.</text>
</comment>
<comment type="catalytic activity">
    <reaction evidence="2">
        <text>L-lysyl-[protein] + acetyl-CoA = N(6)-acetyl-L-lysyl-[protein] + CoA + H(+)</text>
        <dbReference type="Rhea" id="RHEA:45948"/>
        <dbReference type="Rhea" id="RHEA-COMP:9752"/>
        <dbReference type="Rhea" id="RHEA-COMP:10731"/>
        <dbReference type="ChEBI" id="CHEBI:15378"/>
        <dbReference type="ChEBI" id="CHEBI:29969"/>
        <dbReference type="ChEBI" id="CHEBI:57287"/>
        <dbReference type="ChEBI" id="CHEBI:57288"/>
        <dbReference type="ChEBI" id="CHEBI:61930"/>
        <dbReference type="EC" id="2.3.1.48"/>
    </reaction>
</comment>
<comment type="subcellular location">
    <subcellularLocation>
        <location evidence="5">Nucleus</location>
    </subcellularLocation>
</comment>
<comment type="PTM">
    <text evidence="1">Autoacetylation at Lys-274 is required for proper function.</text>
</comment>
<comment type="similarity">
    <text evidence="5">Belongs to the MYST (SAS/MOZ) family.</text>
</comment>
<feature type="chain" id="PRO_0000238466" description="Putative MYST-like histone acetyltransferase 1">
    <location>
        <begin position="1"/>
        <end position="450"/>
    </location>
</feature>
<feature type="domain" description="Tudor-knot" evidence="3">
    <location>
        <begin position="63"/>
        <end position="122"/>
    </location>
</feature>
<feature type="domain" description="MYST-type HAT" evidence="4">
    <location>
        <begin position="174"/>
        <end position="445"/>
    </location>
</feature>
<feature type="zinc finger region" description="C2HC MYST-type" evidence="4">
    <location>
        <begin position="207"/>
        <end position="232"/>
    </location>
</feature>
<feature type="active site" description="Proton donor/acceptor" evidence="1">
    <location>
        <position position="350"/>
    </location>
</feature>
<feature type="binding site" evidence="1">
    <location>
        <begin position="317"/>
        <end position="319"/>
    </location>
    <ligand>
        <name>acetyl-CoA</name>
        <dbReference type="ChEBI" id="CHEBI:57288"/>
    </ligand>
</feature>
<feature type="binding site" evidence="1">
    <location>
        <begin position="324"/>
        <end position="330"/>
    </location>
    <ligand>
        <name>acetyl-CoA</name>
        <dbReference type="ChEBI" id="CHEBI:57288"/>
    </ligand>
</feature>
<feature type="binding site" evidence="1">
    <location>
        <position position="354"/>
    </location>
    <ligand>
        <name>acetyl-CoA</name>
        <dbReference type="ChEBI" id="CHEBI:57288"/>
    </ligand>
</feature>
<feature type="modified residue" description="N6-acetyllysine; by autocatalysis" evidence="1">
    <location>
        <position position="274"/>
    </location>
</feature>
<keyword id="KW-0007">Acetylation</keyword>
<keyword id="KW-0010">Activator</keyword>
<keyword id="KW-0012">Acyltransferase</keyword>
<keyword id="KW-0156">Chromatin regulator</keyword>
<keyword id="KW-0479">Metal-binding</keyword>
<keyword id="KW-0539">Nucleus</keyword>
<keyword id="KW-1185">Reference proteome</keyword>
<keyword id="KW-0804">Transcription</keyword>
<keyword id="KW-0805">Transcription regulation</keyword>
<keyword id="KW-0808">Transferase</keyword>
<keyword id="KW-0862">Zinc</keyword>
<keyword id="KW-0863">Zinc-finger</keyword>
<sequence length="450" mass="51104">MGSMEASTAPENGTAAAAAAAASTACNGAGGGGGAAAASNGGGVERRLRSSAASASWASHLPLEVGTRVMCRWRDQKLHPVKVIERRKSSTSSSPADYEYYVHYTEFNRRLDEWVKLEQLDLETVETDVDEKVEDKATSLKMTRHQKRKIDETHVEQGHEELDAASLREHEEFTKVKNIAKIELGRYEIDTWYFSPFPPEYNDSPKLFFCEFCLNFMKRKEQLQRHMKKCDLKHPPGDEIYRSGTLSMFEVDGKKNKVYGQNLCYLAKLFLDHKTLYYDVDLFLFYVLCECDDRGCHMVGYFSKEKHSEESYNLACILTLPPYQRKGYGKFLIAFSYELSKKEGKVGTPERPLSDLGLLSYRGYWTRVLLEILKKHKSNISIKELSDMTAIKADDILSTLQSLDLIQYRKGQHVICADPKVLDRHLKAAGRGGLEVDVSKLIWTPYKEQG</sequence>
<gene>
    <name type="ordered locus">Os07g0626600</name>
    <name type="ordered locus">LOC_Os07g43360</name>
    <name type="ORF">OJ1339_F05.128</name>
</gene>
<accession>Q8LI34</accession>
<accession>Q0D4H1</accession>
<name>MYST1_ORYSJ</name>